<dbReference type="EC" id="2.7.4.9" evidence="1"/>
<dbReference type="EMBL" id="CP000682">
    <property type="protein sequence ID" value="ABP96176.1"/>
    <property type="molecule type" value="Genomic_DNA"/>
</dbReference>
<dbReference type="RefSeq" id="WP_012021963.1">
    <property type="nucleotide sequence ID" value="NC_009440.1"/>
</dbReference>
<dbReference type="SMR" id="A4YIC4"/>
<dbReference type="STRING" id="399549.Msed_2036"/>
<dbReference type="GeneID" id="91756571"/>
<dbReference type="KEGG" id="mse:Msed_2036"/>
<dbReference type="eggNOG" id="arCOG01891">
    <property type="taxonomic scope" value="Archaea"/>
</dbReference>
<dbReference type="HOGENOM" id="CLU_049131_1_3_2"/>
<dbReference type="Proteomes" id="UP000000242">
    <property type="component" value="Chromosome"/>
</dbReference>
<dbReference type="GO" id="GO:0005737">
    <property type="term" value="C:cytoplasm"/>
    <property type="evidence" value="ECO:0007669"/>
    <property type="project" value="TreeGrafter"/>
</dbReference>
<dbReference type="GO" id="GO:0005524">
    <property type="term" value="F:ATP binding"/>
    <property type="evidence" value="ECO:0007669"/>
    <property type="project" value="UniProtKB-UniRule"/>
</dbReference>
<dbReference type="GO" id="GO:0004798">
    <property type="term" value="F:dTMP kinase activity"/>
    <property type="evidence" value="ECO:0007669"/>
    <property type="project" value="UniProtKB-UniRule"/>
</dbReference>
<dbReference type="GO" id="GO:0006233">
    <property type="term" value="P:dTDP biosynthetic process"/>
    <property type="evidence" value="ECO:0007669"/>
    <property type="project" value="InterPro"/>
</dbReference>
<dbReference type="GO" id="GO:0006235">
    <property type="term" value="P:dTTP biosynthetic process"/>
    <property type="evidence" value="ECO:0007669"/>
    <property type="project" value="UniProtKB-UniRule"/>
</dbReference>
<dbReference type="GO" id="GO:0006227">
    <property type="term" value="P:dUDP biosynthetic process"/>
    <property type="evidence" value="ECO:0007669"/>
    <property type="project" value="TreeGrafter"/>
</dbReference>
<dbReference type="CDD" id="cd01672">
    <property type="entry name" value="TMPK"/>
    <property type="match status" value="1"/>
</dbReference>
<dbReference type="Gene3D" id="3.40.50.300">
    <property type="entry name" value="P-loop containing nucleotide triphosphate hydrolases"/>
    <property type="match status" value="1"/>
</dbReference>
<dbReference type="HAMAP" id="MF_00165">
    <property type="entry name" value="Thymidylate_kinase"/>
    <property type="match status" value="1"/>
</dbReference>
<dbReference type="InterPro" id="IPR027417">
    <property type="entry name" value="P-loop_NTPase"/>
</dbReference>
<dbReference type="InterPro" id="IPR039430">
    <property type="entry name" value="Thymidylate_kin-like_dom"/>
</dbReference>
<dbReference type="InterPro" id="IPR018095">
    <property type="entry name" value="Thymidylate_kin_CS"/>
</dbReference>
<dbReference type="InterPro" id="IPR018094">
    <property type="entry name" value="Thymidylate_kinase"/>
</dbReference>
<dbReference type="NCBIfam" id="TIGR00041">
    <property type="entry name" value="DTMP_kinase"/>
    <property type="match status" value="1"/>
</dbReference>
<dbReference type="PANTHER" id="PTHR10344">
    <property type="entry name" value="THYMIDYLATE KINASE"/>
    <property type="match status" value="1"/>
</dbReference>
<dbReference type="PANTHER" id="PTHR10344:SF4">
    <property type="entry name" value="UMP-CMP KINASE 2, MITOCHONDRIAL"/>
    <property type="match status" value="1"/>
</dbReference>
<dbReference type="Pfam" id="PF02223">
    <property type="entry name" value="Thymidylate_kin"/>
    <property type="match status" value="1"/>
</dbReference>
<dbReference type="SUPFAM" id="SSF52540">
    <property type="entry name" value="P-loop containing nucleoside triphosphate hydrolases"/>
    <property type="match status" value="1"/>
</dbReference>
<dbReference type="PROSITE" id="PS01331">
    <property type="entry name" value="THYMIDYLATE_KINASE"/>
    <property type="match status" value="1"/>
</dbReference>
<reference key="1">
    <citation type="journal article" date="2008" name="Appl. Environ. Microbiol.">
        <title>The genome sequence of the metal-mobilizing, extremely thermoacidophilic archaeon Metallosphaera sedula provides insights into bioleaching-associated metabolism.</title>
        <authorList>
            <person name="Auernik K.S."/>
            <person name="Maezato Y."/>
            <person name="Blum P.H."/>
            <person name="Kelly R.M."/>
        </authorList>
    </citation>
    <scope>NUCLEOTIDE SEQUENCE [LARGE SCALE GENOMIC DNA]</scope>
    <source>
        <strain>ATCC 51363 / DSM 5348 / JCM 9185 / NBRC 15509 / TH2</strain>
    </source>
</reference>
<name>KTHY_METS5</name>
<gene>
    <name evidence="1" type="primary">tmk</name>
    <name type="ordered locus">Msed_2036</name>
</gene>
<keyword id="KW-0067">ATP-binding</keyword>
<keyword id="KW-0418">Kinase</keyword>
<keyword id="KW-0545">Nucleotide biosynthesis</keyword>
<keyword id="KW-0547">Nucleotide-binding</keyword>
<keyword id="KW-1185">Reference proteome</keyword>
<keyword id="KW-0808">Transferase</keyword>
<accession>A4YIC4</accession>
<organism>
    <name type="scientific">Metallosphaera sedula (strain ATCC 51363 / DSM 5348 / JCM 9185 / NBRC 15509 / TH2)</name>
    <dbReference type="NCBI Taxonomy" id="399549"/>
    <lineage>
        <taxon>Archaea</taxon>
        <taxon>Thermoproteota</taxon>
        <taxon>Thermoprotei</taxon>
        <taxon>Sulfolobales</taxon>
        <taxon>Sulfolobaceae</taxon>
        <taxon>Metallosphaera</taxon>
    </lineage>
</organism>
<protein>
    <recommendedName>
        <fullName evidence="1">Probable thymidylate kinase</fullName>
        <ecNumber evidence="1">2.7.4.9</ecNumber>
    </recommendedName>
    <alternativeName>
        <fullName evidence="1">dTMP kinase</fullName>
    </alternativeName>
</protein>
<comment type="catalytic activity">
    <reaction evidence="1">
        <text>dTMP + ATP = dTDP + ADP</text>
        <dbReference type="Rhea" id="RHEA:13517"/>
        <dbReference type="ChEBI" id="CHEBI:30616"/>
        <dbReference type="ChEBI" id="CHEBI:58369"/>
        <dbReference type="ChEBI" id="CHEBI:63528"/>
        <dbReference type="ChEBI" id="CHEBI:456216"/>
        <dbReference type="EC" id="2.7.4.9"/>
    </reaction>
</comment>
<comment type="similarity">
    <text evidence="1">Belongs to the thymidylate kinase family.</text>
</comment>
<sequence>MNLVVIEGIDASGKTTLAKRLAESLSPRFKVLLTQEPFTDDIKQLLEKYQWKDQVLLALLFSADRRIHVKWMESQNVDLIISDRYFFSTLAYQGVGVDRTWLESLSSIFPLPNLTILLDVPVNVALERLRNKRDSLDFEEKRKSLHQVRENYLSLARRYNFKILDGTLPLEKLTSISLELVQGLLSSSTSRGSQGT</sequence>
<proteinExistence type="inferred from homology"/>
<feature type="chain" id="PRO_1000071562" description="Probable thymidylate kinase">
    <location>
        <begin position="1"/>
        <end position="196"/>
    </location>
</feature>
<feature type="binding site" evidence="1">
    <location>
        <begin position="8"/>
        <end position="15"/>
    </location>
    <ligand>
        <name>ATP</name>
        <dbReference type="ChEBI" id="CHEBI:30616"/>
    </ligand>
</feature>
<evidence type="ECO:0000255" key="1">
    <source>
        <dbReference type="HAMAP-Rule" id="MF_00165"/>
    </source>
</evidence>